<feature type="chain" id="PRO_0000214253" description="Na(+)-translocating NADH-quinone reductase subunit E">
    <location>
        <begin position="1"/>
        <end position="197"/>
    </location>
</feature>
<feature type="transmembrane region" description="Helical" evidence="1">
    <location>
        <begin position="11"/>
        <end position="31"/>
    </location>
</feature>
<feature type="transmembrane region" description="Helical" evidence="1">
    <location>
        <begin position="35"/>
        <end position="55"/>
    </location>
</feature>
<feature type="transmembrane region" description="Helical" evidence="1">
    <location>
        <begin position="76"/>
        <end position="96"/>
    </location>
</feature>
<feature type="transmembrane region" description="Helical" evidence="1">
    <location>
        <begin position="108"/>
        <end position="128"/>
    </location>
</feature>
<feature type="transmembrane region" description="Helical" evidence="1">
    <location>
        <begin position="139"/>
        <end position="159"/>
    </location>
</feature>
<feature type="transmembrane region" description="Helical" evidence="1">
    <location>
        <begin position="175"/>
        <end position="195"/>
    </location>
</feature>
<protein>
    <recommendedName>
        <fullName evidence="1">Na(+)-translocating NADH-quinone reductase subunit E</fullName>
        <shortName evidence="1">Na(+)-NQR subunit E</shortName>
        <shortName evidence="1">Na(+)-translocating NQR subunit E</shortName>
        <ecNumber evidence="1">7.2.1.1</ecNumber>
    </recommendedName>
    <alternativeName>
        <fullName evidence="1">NQR complex subunit E</fullName>
    </alternativeName>
    <alternativeName>
        <fullName evidence="1">NQR-1 subunit E</fullName>
    </alternativeName>
</protein>
<reference key="1">
    <citation type="journal article" date="2000" name="Nature">
        <title>Complete DNA sequence of a serogroup A strain of Neisseria meningitidis Z2491.</title>
        <authorList>
            <person name="Parkhill J."/>
            <person name="Achtman M."/>
            <person name="James K.D."/>
            <person name="Bentley S.D."/>
            <person name="Churcher C.M."/>
            <person name="Klee S.R."/>
            <person name="Morelli G."/>
            <person name="Basham D."/>
            <person name="Brown D."/>
            <person name="Chillingworth T."/>
            <person name="Davies R.M."/>
            <person name="Davis P."/>
            <person name="Devlin K."/>
            <person name="Feltwell T."/>
            <person name="Hamlin N."/>
            <person name="Holroyd S."/>
            <person name="Jagels K."/>
            <person name="Leather S."/>
            <person name="Moule S."/>
            <person name="Mungall K.L."/>
            <person name="Quail M.A."/>
            <person name="Rajandream M.A."/>
            <person name="Rutherford K.M."/>
            <person name="Simmonds M."/>
            <person name="Skelton J."/>
            <person name="Whitehead S."/>
            <person name="Spratt B.G."/>
            <person name="Barrell B.G."/>
        </authorList>
    </citation>
    <scope>NUCLEOTIDE SEQUENCE [LARGE SCALE GENOMIC DNA]</scope>
    <source>
        <strain>DSM 15465 / Z2491</strain>
    </source>
</reference>
<dbReference type="EC" id="7.2.1.1" evidence="1"/>
<dbReference type="EMBL" id="AL157959">
    <property type="protein sequence ID" value="CAM07999.1"/>
    <property type="molecule type" value="Genomic_DNA"/>
</dbReference>
<dbReference type="PIR" id="E81918">
    <property type="entry name" value="E81918"/>
</dbReference>
<dbReference type="RefSeq" id="WP_002219686.1">
    <property type="nucleotide sequence ID" value="NC_003116.1"/>
</dbReference>
<dbReference type="SMR" id="Q9JVQ2"/>
<dbReference type="EnsemblBacteria" id="CAM07999">
    <property type="protein sequence ID" value="CAM07999"/>
    <property type="gene ID" value="NMA0748"/>
</dbReference>
<dbReference type="GeneID" id="93386620"/>
<dbReference type="KEGG" id="nma:NMA0748"/>
<dbReference type="HOGENOM" id="CLU_095255_0_0_4"/>
<dbReference type="Proteomes" id="UP000000626">
    <property type="component" value="Chromosome"/>
</dbReference>
<dbReference type="GO" id="GO:0009276">
    <property type="term" value="C:Gram-negative-bacterium-type cell wall"/>
    <property type="evidence" value="ECO:0007669"/>
    <property type="project" value="InterPro"/>
</dbReference>
<dbReference type="GO" id="GO:0005886">
    <property type="term" value="C:plasma membrane"/>
    <property type="evidence" value="ECO:0007669"/>
    <property type="project" value="UniProtKB-SubCell"/>
</dbReference>
<dbReference type="GO" id="GO:0016655">
    <property type="term" value="F:oxidoreductase activity, acting on NAD(P)H, quinone or similar compound as acceptor"/>
    <property type="evidence" value="ECO:0007669"/>
    <property type="project" value="UniProtKB-UniRule"/>
</dbReference>
<dbReference type="GO" id="GO:0022904">
    <property type="term" value="P:respiratory electron transport chain"/>
    <property type="evidence" value="ECO:0007669"/>
    <property type="project" value="InterPro"/>
</dbReference>
<dbReference type="GO" id="GO:0006814">
    <property type="term" value="P:sodium ion transport"/>
    <property type="evidence" value="ECO:0007669"/>
    <property type="project" value="UniProtKB-UniRule"/>
</dbReference>
<dbReference type="HAMAP" id="MF_00429">
    <property type="entry name" value="NqrE"/>
    <property type="match status" value="1"/>
</dbReference>
<dbReference type="InterPro" id="IPR003667">
    <property type="entry name" value="NqrDE/RnfAE"/>
</dbReference>
<dbReference type="InterPro" id="IPR050133">
    <property type="entry name" value="NqrDE/RnfAE_oxidrdctase"/>
</dbReference>
<dbReference type="InterPro" id="IPR010967">
    <property type="entry name" value="NqrE"/>
</dbReference>
<dbReference type="NCBIfam" id="TIGR01940">
    <property type="entry name" value="nqrE"/>
    <property type="match status" value="1"/>
</dbReference>
<dbReference type="PANTHER" id="PTHR30335">
    <property type="entry name" value="INTEGRAL MEMBRANE PROTEIN OF SOXR-REDUCING COMPLEX"/>
    <property type="match status" value="1"/>
</dbReference>
<dbReference type="PANTHER" id="PTHR30335:SF1">
    <property type="entry name" value="NA(+)-TRANSLOCATING NADH-QUINONE REDUCTASE SUBUNIT E"/>
    <property type="match status" value="1"/>
</dbReference>
<dbReference type="Pfam" id="PF02508">
    <property type="entry name" value="Rnf-Nqr"/>
    <property type="match status" value="1"/>
</dbReference>
<dbReference type="PIRSF" id="PIRSF006102">
    <property type="entry name" value="NQR_DE"/>
    <property type="match status" value="1"/>
</dbReference>
<gene>
    <name evidence="1" type="primary">nqrE</name>
    <name type="ordered locus">NMA0748</name>
</gene>
<evidence type="ECO:0000255" key="1">
    <source>
        <dbReference type="HAMAP-Rule" id="MF_00429"/>
    </source>
</evidence>
<sequence>MEHYLSLFIKSVFIENMALSFFLGMCTFLAVSKKVSTAFGLGVAVIFVLGLSVPANQLVYSLLKDGAIVEGVDLTFLKFITFIGVIAALVQILEMFLDKFVPALYNALGIYLPLITVNCAIFGAVSFMAQREYGFGESVVYGFGAGLGWMLAIVALAGITEKMKYSDAPKGLKGLGITFIAAGLMAMAFMSFSGIQL</sequence>
<organism>
    <name type="scientific">Neisseria meningitidis serogroup A / serotype 4A (strain DSM 15465 / Z2491)</name>
    <dbReference type="NCBI Taxonomy" id="122587"/>
    <lineage>
        <taxon>Bacteria</taxon>
        <taxon>Pseudomonadati</taxon>
        <taxon>Pseudomonadota</taxon>
        <taxon>Betaproteobacteria</taxon>
        <taxon>Neisseriales</taxon>
        <taxon>Neisseriaceae</taxon>
        <taxon>Neisseria</taxon>
    </lineage>
</organism>
<keyword id="KW-0997">Cell inner membrane</keyword>
<keyword id="KW-1003">Cell membrane</keyword>
<keyword id="KW-0406">Ion transport</keyword>
<keyword id="KW-0472">Membrane</keyword>
<keyword id="KW-0520">NAD</keyword>
<keyword id="KW-0915">Sodium</keyword>
<keyword id="KW-0739">Sodium transport</keyword>
<keyword id="KW-1278">Translocase</keyword>
<keyword id="KW-0812">Transmembrane</keyword>
<keyword id="KW-1133">Transmembrane helix</keyword>
<keyword id="KW-0813">Transport</keyword>
<keyword id="KW-0830">Ubiquinone</keyword>
<name>NQRE_NEIMA</name>
<proteinExistence type="inferred from homology"/>
<comment type="function">
    <text evidence="1">NQR complex catalyzes the reduction of ubiquinone-1 to ubiquinol by two successive reactions, coupled with the transport of Na(+) ions from the cytoplasm to the periplasm. NqrA to NqrE are probably involved in the second step, the conversion of ubisemiquinone to ubiquinol.</text>
</comment>
<comment type="catalytic activity">
    <reaction evidence="1">
        <text>a ubiquinone + n Na(+)(in) + NADH + H(+) = a ubiquinol + n Na(+)(out) + NAD(+)</text>
        <dbReference type="Rhea" id="RHEA:47748"/>
        <dbReference type="Rhea" id="RHEA-COMP:9565"/>
        <dbReference type="Rhea" id="RHEA-COMP:9566"/>
        <dbReference type="ChEBI" id="CHEBI:15378"/>
        <dbReference type="ChEBI" id="CHEBI:16389"/>
        <dbReference type="ChEBI" id="CHEBI:17976"/>
        <dbReference type="ChEBI" id="CHEBI:29101"/>
        <dbReference type="ChEBI" id="CHEBI:57540"/>
        <dbReference type="ChEBI" id="CHEBI:57945"/>
        <dbReference type="EC" id="7.2.1.1"/>
    </reaction>
</comment>
<comment type="subunit">
    <text evidence="1">Composed of six subunits; NqrA, NqrB, NqrC, NqrD, NqrE and NqrF.</text>
</comment>
<comment type="subcellular location">
    <subcellularLocation>
        <location evidence="1">Cell inner membrane</location>
        <topology evidence="1">Multi-pass membrane protein</topology>
    </subcellularLocation>
</comment>
<comment type="similarity">
    <text evidence="1">Belongs to the NqrDE/RnfAE family.</text>
</comment>
<accession>Q9JVQ2</accession>
<accession>A1IQG8</accession>